<reference key="1">
    <citation type="journal article" date="2015" name="Chem. Biol.">
        <title>Three redundant synthetases secure redox-active pigment production in the basidiomycete Paxillus involutus.</title>
        <authorList>
            <person name="Braesel J."/>
            <person name="Gotze S."/>
            <person name="Shah F."/>
            <person name="Heine D."/>
            <person name="Tauber J."/>
            <person name="Hertweck C."/>
            <person name="Tunlid A."/>
            <person name="Stallforth P."/>
            <person name="Hoffmeister D."/>
        </authorList>
    </citation>
    <scope>NUCLEOTIDE SEQUENCE [MRNA]</scope>
    <scope>FUNCTION</scope>
    <scope>BIOPHYSICOCHEMICAL PROPERTIES</scope>
    <source>
        <strain>ATCC MYA-4647</strain>
    </source>
</reference>
<proteinExistence type="evidence at protein level"/>
<name>INVA1_PAXIN</name>
<dbReference type="EC" id="2.3.1.-"/>
<dbReference type="EMBL" id="KT958230">
    <property type="protein sequence ID" value="ALN66882.1"/>
    <property type="molecule type" value="mRNA"/>
</dbReference>
<dbReference type="SMR" id="A0A0S2E7Z1"/>
<dbReference type="ESTHER" id="paxin-inva1">
    <property type="family name" value="Thioesterase"/>
</dbReference>
<dbReference type="GO" id="GO:0016878">
    <property type="term" value="F:acid-thiol ligase activity"/>
    <property type="evidence" value="ECO:0007669"/>
    <property type="project" value="UniProtKB-ARBA"/>
</dbReference>
<dbReference type="GO" id="GO:0016740">
    <property type="term" value="F:transferase activity"/>
    <property type="evidence" value="ECO:0007669"/>
    <property type="project" value="UniProtKB-KW"/>
</dbReference>
<dbReference type="GO" id="GO:0009058">
    <property type="term" value="P:biosynthetic process"/>
    <property type="evidence" value="ECO:0007669"/>
    <property type="project" value="InterPro"/>
</dbReference>
<dbReference type="Gene3D" id="3.30.300.30">
    <property type="match status" value="1"/>
</dbReference>
<dbReference type="Gene3D" id="1.10.1200.10">
    <property type="entry name" value="ACP-like"/>
    <property type="match status" value="1"/>
</dbReference>
<dbReference type="Gene3D" id="3.40.50.1820">
    <property type="entry name" value="alpha/beta hydrolase"/>
    <property type="match status" value="1"/>
</dbReference>
<dbReference type="Gene3D" id="3.40.50.12780">
    <property type="entry name" value="N-terminal domain of ligase-like"/>
    <property type="match status" value="1"/>
</dbReference>
<dbReference type="InterPro" id="IPR029058">
    <property type="entry name" value="AB_hydrolase_fold"/>
</dbReference>
<dbReference type="InterPro" id="IPR036736">
    <property type="entry name" value="ACP-like_sf"/>
</dbReference>
<dbReference type="InterPro" id="IPR045851">
    <property type="entry name" value="AMP-bd_C_sf"/>
</dbReference>
<dbReference type="InterPro" id="IPR020845">
    <property type="entry name" value="AMP-binding_CS"/>
</dbReference>
<dbReference type="InterPro" id="IPR000873">
    <property type="entry name" value="AMP-dep_synth/lig_dom"/>
</dbReference>
<dbReference type="InterPro" id="IPR042099">
    <property type="entry name" value="ANL_N_sf"/>
</dbReference>
<dbReference type="InterPro" id="IPR050237">
    <property type="entry name" value="ATP-dep_AMP-bd_enzyme"/>
</dbReference>
<dbReference type="InterPro" id="IPR020802">
    <property type="entry name" value="PKS_thioesterase"/>
</dbReference>
<dbReference type="InterPro" id="IPR009081">
    <property type="entry name" value="PP-bd_ACP"/>
</dbReference>
<dbReference type="InterPro" id="IPR001031">
    <property type="entry name" value="Thioesterase"/>
</dbReference>
<dbReference type="PANTHER" id="PTHR43767">
    <property type="entry name" value="LONG-CHAIN-FATTY-ACID--COA LIGASE"/>
    <property type="match status" value="1"/>
</dbReference>
<dbReference type="PANTHER" id="PTHR43767:SF1">
    <property type="entry name" value="NONRIBOSOMAL PEPTIDE SYNTHASE PES1 (EUROFUNG)-RELATED"/>
    <property type="match status" value="1"/>
</dbReference>
<dbReference type="Pfam" id="PF00501">
    <property type="entry name" value="AMP-binding"/>
    <property type="match status" value="1"/>
</dbReference>
<dbReference type="Pfam" id="PF00550">
    <property type="entry name" value="PP-binding"/>
    <property type="match status" value="1"/>
</dbReference>
<dbReference type="Pfam" id="PF00975">
    <property type="entry name" value="Thioesterase"/>
    <property type="match status" value="1"/>
</dbReference>
<dbReference type="SMART" id="SM00824">
    <property type="entry name" value="PKS_TE"/>
    <property type="match status" value="1"/>
</dbReference>
<dbReference type="SUPFAM" id="SSF56801">
    <property type="entry name" value="Acetyl-CoA synthetase-like"/>
    <property type="match status" value="1"/>
</dbReference>
<dbReference type="SUPFAM" id="SSF47336">
    <property type="entry name" value="ACP-like"/>
    <property type="match status" value="1"/>
</dbReference>
<dbReference type="SUPFAM" id="SSF53474">
    <property type="entry name" value="alpha/beta-Hydrolases"/>
    <property type="match status" value="1"/>
</dbReference>
<dbReference type="PROSITE" id="PS00455">
    <property type="entry name" value="AMP_BINDING"/>
    <property type="match status" value="1"/>
</dbReference>
<dbReference type="PROSITE" id="PS50075">
    <property type="entry name" value="CARRIER"/>
    <property type="match status" value="1"/>
</dbReference>
<sequence>MSPVATTTSVTPDVISSLKTSFSAGQTSYIPSTLFDVLSYAAERYPSHELGFITSSAHDSSIQTKTFSLFNAQVRNLGRALLDLNKPAGSIIVVYLTEHEDNMAAVWACLLAGYVPCLQPALSAQQAHKEGHVAHIKNLFGSATWLTNEAGAEQVSSIAGLEIHLLSELKIAAEGYSVSADWTARTVQPDDEAILFLTSGSTGFSKAVVHTHRTILAACYAKGEAYGLTSESNILNWVGFDHVAGSLEMHIAPLLYGASQLHVHASAILSDPLRFLQLIDEKSINVAFAPNFLLAKLTRDLEKKTELFGSFDLSSVTRINSGGEAVVSKTAKAFVATLKNLSRDPSKVSFVISPGFGMTETCAGCIYNPADVSTSEPNYEFLELGTPITGCEMRIVNPEDGVTPRVDGESGELQVRGPMVFSRYYNNAEATASSFVEGGWYRTGDVGIVENGVMRLSGRIKETVIVHGVSYGIPELETYLQTVEGVTHSFLAAAPYRAPGQETEGFIIFYAPTFDLYGEDASSKLFATHRALRDISVKMITLPPQHIVPIPVNQMEKTTLGKLSRARLTGLFKQGELAKHIARAEELLSEARGASFVTPQTETEQTLAAIYAGIFNLEVADVSATDNFFELGGTSIDVIRLKREGEAAFDLPEIPTIQILKHPVVSSLANYIVALKTKGVNAEEYDPIVPLQLTGKKTPIFMVHPGVGEVLIFVNLAKYFQNERPFYALRARGFEPGQPFFTSMDEMVSCYAAAVKRTQAHGPYAIAGYSYGGVVAFEVAKRLEAMGEEVKFTGLINIPPHIADRMHEIDWTGGMLNLSYFLGLVSKQDANDLAPSMRPLTRKEQLEIVWKLSPPERLVELQLTPEKLDHWVDIAGSLIECGKEYNPGGSVSALDVFYAIPLRGSKEDWLNKQLKPWEEFSRGATSYTDVPGQHYTLMDFDHVPGFQKIFRSRLEARGL</sequence>
<keyword id="KW-0596">Phosphopantetheine</keyword>
<keyword id="KW-0597">Phosphoprotein</keyword>
<keyword id="KW-0808">Transferase</keyword>
<accession>A0A0S2E7Z1</accession>
<organism>
    <name type="scientific">Paxillus involutus</name>
    <name type="common">Naked brimcap</name>
    <dbReference type="NCBI Taxonomy" id="71150"/>
    <lineage>
        <taxon>Eukaryota</taxon>
        <taxon>Fungi</taxon>
        <taxon>Dikarya</taxon>
        <taxon>Basidiomycota</taxon>
        <taxon>Agaricomycotina</taxon>
        <taxon>Agaricomycetes</taxon>
        <taxon>Agaricomycetidae</taxon>
        <taxon>Boletales</taxon>
        <taxon>Paxilineae</taxon>
        <taxon>Paxillaceae</taxon>
        <taxon>Paxillus</taxon>
    </lineage>
</organism>
<evidence type="ECO:0000250" key="1">
    <source>
        <dbReference type="UniProtKB" id="B7STY1"/>
    </source>
</evidence>
<evidence type="ECO:0000255" key="2"/>
<evidence type="ECO:0000255" key="3">
    <source>
        <dbReference type="PROSITE-ProRule" id="PRU00258"/>
    </source>
</evidence>
<evidence type="ECO:0000269" key="4">
    <source>
    </source>
</evidence>
<evidence type="ECO:0000305" key="5"/>
<feature type="chain" id="PRO_0000442620" description="Atromentin synthetase invA1">
    <location>
        <begin position="1"/>
        <end position="959"/>
    </location>
</feature>
<feature type="domain" description="Carrier" evidence="3">
    <location>
        <begin position="598"/>
        <end position="676"/>
    </location>
</feature>
<feature type="region of interest" description="Adenylation (A) domain" evidence="2">
    <location>
        <begin position="59"/>
        <end position="466"/>
    </location>
</feature>
<feature type="region of interest" description="Thiolation and peptide carrier (T) domain" evidence="2">
    <location>
        <begin position="603"/>
        <end position="673"/>
    </location>
</feature>
<feature type="region of interest" description="Thioesterase (TE) domain" evidence="2">
    <location>
        <begin position="699"/>
        <end position="946"/>
    </location>
</feature>
<feature type="modified residue" description="O-(pantetheine 4'-phosphoryl)serine" evidence="3">
    <location>
        <position position="635"/>
    </location>
</feature>
<gene>
    <name type="primary">invA1</name>
</gene>
<comment type="function">
    <text evidence="4">An L-tyrosine:2-oxoglutarate aminotransferase (probably invD) and atromentin synthetase invA1 catalyze consecutive steps to turn over L-tyrosine into atromentin, which represents the generic precursor molecule for the entire terphenylquinone and pulvinic acid family of pigments, which are widely distributed secondary metabolites in homobasidiomycetes. The first step catalyzed by the aminotransferase converts L-tyrosine in to 4-hydroxyphenylpyruvate (4-HPP). Adenylation of two 4-HPP monomers by the invA1 adenylation (A) domain, covalent tethering of the monomers as a thioester and oxoester onto the invA1 thiolation (T) and thioesterase (TE) domains, respectively, and symmetric C-C-bond formation between two monomers catalyzed by the invA1 TE domain leads to atromentin.</text>
</comment>
<comment type="biophysicochemical properties">
    <phDependence>
        <text evidence="4">Optimum pH is 7.2.</text>
    </phDependence>
    <temperatureDependence>
        <text evidence="4">Optimum temperature is 25 degrees Celsius.</text>
    </temperatureDependence>
</comment>
<comment type="pathway">
    <text evidence="1">Secondary metabolite biosynthesis.</text>
</comment>
<comment type="similarity">
    <text evidence="5">Belongs to the ATP-dependent AMP-binding enzyme family.</text>
</comment>
<protein>
    <recommendedName>
        <fullName>Atromentin synthetase invA1</fullName>
        <ecNumber>2.3.1.-</ecNumber>
    </recommendedName>
    <alternativeName>
        <fullName>Nonribosomal peptide synthase-like enzyme invA1</fullName>
        <shortName>NRPS-like</shortName>
    </alternativeName>
</protein>